<gene>
    <name evidence="5" type="ordered locus">Hore_00420</name>
</gene>
<reference key="1">
    <citation type="journal article" date="2009" name="PLoS ONE">
        <title>Genome analysis of the anaerobic thermohalophilic bacterium Halothermothrix orenii.</title>
        <authorList>
            <person name="Mavromatis K."/>
            <person name="Ivanova N."/>
            <person name="Anderson I."/>
            <person name="Lykidis A."/>
            <person name="Hooper S.D."/>
            <person name="Sun H."/>
            <person name="Kunin V."/>
            <person name="Lapidus A."/>
            <person name="Hugenholtz P."/>
            <person name="Patel B."/>
            <person name="Kyrpides N.C."/>
        </authorList>
    </citation>
    <scope>NUCLEOTIDE SEQUENCE [LARGE SCALE GENOMIC DNA]</scope>
    <source>
        <strain>H 168 / OCM 544 / DSM 9562</strain>
    </source>
</reference>
<reference key="2">
    <citation type="journal article" date="2021" name="Molecules">
        <title>Discovery of a Kojibiose Hydrolase by Analysis of Specificity-Determining Correlated Positions in Glycoside Hydrolase Family 65.</title>
        <authorList>
            <person name="De Beul E."/>
            <person name="Jongbloet A."/>
            <person name="Franceus J."/>
            <person name="Desmet T."/>
        </authorList>
    </citation>
    <scope>FUNCTION</scope>
    <scope>CATALYTIC ACTIVITY</scope>
</reference>
<accession>B8D049</accession>
<sequence length="780" mass="90031">MAIAYNLGKGEYKNWIISETEFNENNLPKFETIFSLGNGYMGLRAATEEHYFNETRGCYVAGMFDRFKGEVAELPNIPDYVGMEIKLDGERFNLNQGKIISYHRYLNVKDGELVREVEWQSPAGNITKLVFKRFVSLANLHLAGFKIKIIPVNYSGKVAIKTGYNGQVTNSGVQHFVEGDKRVLPDGKSYLTVRTQESGIFTIVAGKFRFLINASEINPQQQIVTGRRQLFLRSEYELKENECLEMEKCVIVYTGRDLEFKDKDIDSGDIVETALTTLDKAGTKRYEELFSEHRQKWHKLWHEIDIEIGGPDFDQLAVRFAQYHLVQMTPSHDSRISVAAKGLSGEGYKGHVFWDTEIFILPFFIYTFPQIARKLLEYRYHTLDGARKKARENGYKGAMYPWESADTGEETTPEFGEVDIKTGKPIRIWCGEIEQHITADVAYAIWHYYQVTGDKEFMYNYGTEIFMETARFWASRLEYNQGLDRYEIKDVIGPDEYSEHVNNNAYTNYMVKWHLEKAIDIYNWLSDDSRDILEKIINKIALKEDELNEWKKKKDKIYLPFQEDSKVIPQFDGFMDQDVIDISSYRGDVGAIMKAYSWDEITSSQVIKQADVVMLLYLLGEDFSHEVKEKNYHYYEPKTLHDSSLSPSIHAIMGKEIGDLDEAYRYFNKSTTIDLGRNMRSCDAGLHSASLGGIWQAVVLGFGGVKVKDNVLNIDPMLPEKWDYLNFKLKWQGMPIRVEIRNDRVSVSFLNDDKAMLKDVSVMVKGRNLQLNNNKAVVNL</sequence>
<protein>
    <recommendedName>
        <fullName evidence="3">Kojibiose phosphorylase</fullName>
        <shortName evidence="3">KP</shortName>
        <ecNumber evidence="2">2.4.1.230</ecNumber>
    </recommendedName>
</protein>
<organism>
    <name type="scientific">Halothermothrix orenii (strain H 168 / OCM 544 / DSM 9562)</name>
    <dbReference type="NCBI Taxonomy" id="373903"/>
    <lineage>
        <taxon>Bacteria</taxon>
        <taxon>Bacillati</taxon>
        <taxon>Bacillota</taxon>
        <taxon>Clostridia</taxon>
        <taxon>Halanaerobiales</taxon>
        <taxon>Halothermotrichaceae</taxon>
        <taxon>Halothermothrix</taxon>
    </lineage>
</organism>
<feature type="chain" id="PRO_0000461493" description="Kojibiose phosphorylase">
    <location>
        <begin position="1"/>
        <end position="780"/>
    </location>
</feature>
<feature type="active site" description="Proton donor" evidence="1">
    <location>
        <position position="496"/>
    </location>
</feature>
<feature type="binding site" evidence="1">
    <location>
        <begin position="354"/>
        <end position="355"/>
    </location>
    <ligand>
        <name>substrate</name>
    </ligand>
</feature>
<feature type="binding site" evidence="1">
    <location>
        <begin position="608"/>
        <end position="609"/>
    </location>
    <ligand>
        <name>substrate</name>
    </ligand>
</feature>
<name>KOJP_HALOH</name>
<comment type="function">
    <text evidence="2">Catalyzes the reversible phosphorolysis of kojibiose into beta-D-glucose 1-phosphate (Glc1P) and D-glucose (PubMed:34684901). In the reverse direction, uses Glc1P as acceptor to produce alpha-1,2-glucans up to a degree of polymerization of 6 (PubMed:34684901).</text>
</comment>
<comment type="catalytic activity">
    <reaction evidence="2">
        <text>kojibiose + phosphate = beta-D-glucose 1-phosphate + D-glucose</text>
        <dbReference type="Rhea" id="RHEA:11176"/>
        <dbReference type="ChEBI" id="CHEBI:4167"/>
        <dbReference type="ChEBI" id="CHEBI:43474"/>
        <dbReference type="ChEBI" id="CHEBI:57684"/>
        <dbReference type="ChEBI" id="CHEBI:142460"/>
        <dbReference type="EC" id="2.4.1.230"/>
    </reaction>
</comment>
<comment type="similarity">
    <text evidence="4">Belongs to the glycosyl hydrolase 65 family.</text>
</comment>
<keyword id="KW-0119">Carbohydrate metabolism</keyword>
<keyword id="KW-0328">Glycosyltransferase</keyword>
<keyword id="KW-1185">Reference proteome</keyword>
<keyword id="KW-0808">Transferase</keyword>
<proteinExistence type="evidence at protein level"/>
<dbReference type="EC" id="2.4.1.230" evidence="2"/>
<dbReference type="EMBL" id="CP001098">
    <property type="protein sequence ID" value="ACL68803.1"/>
    <property type="molecule type" value="Genomic_DNA"/>
</dbReference>
<dbReference type="RefSeq" id="WP_012635002.1">
    <property type="nucleotide sequence ID" value="NC_011899.1"/>
</dbReference>
<dbReference type="SMR" id="B8D049"/>
<dbReference type="STRING" id="373903.Hore_00420"/>
<dbReference type="CAZy" id="GH65">
    <property type="family name" value="Glycoside Hydrolase Family 65"/>
</dbReference>
<dbReference type="KEGG" id="hor:Hore_00420"/>
<dbReference type="eggNOG" id="COG1554">
    <property type="taxonomic scope" value="Bacteria"/>
</dbReference>
<dbReference type="HOGENOM" id="CLU_006285_2_1_9"/>
<dbReference type="OrthoDB" id="9758855at2"/>
<dbReference type="Proteomes" id="UP000000719">
    <property type="component" value="Chromosome"/>
</dbReference>
<dbReference type="GO" id="GO:0030246">
    <property type="term" value="F:carbohydrate binding"/>
    <property type="evidence" value="ECO:0007669"/>
    <property type="project" value="InterPro"/>
</dbReference>
<dbReference type="GO" id="GO:0004553">
    <property type="term" value="F:hydrolase activity, hydrolyzing O-glycosyl compounds"/>
    <property type="evidence" value="ECO:0007669"/>
    <property type="project" value="TreeGrafter"/>
</dbReference>
<dbReference type="GO" id="GO:0033831">
    <property type="term" value="F:kojibiose phosphorylase activity"/>
    <property type="evidence" value="ECO:0007669"/>
    <property type="project" value="UniProtKB-EC"/>
</dbReference>
<dbReference type="GO" id="GO:0005975">
    <property type="term" value="P:carbohydrate metabolic process"/>
    <property type="evidence" value="ECO:0007669"/>
    <property type="project" value="InterPro"/>
</dbReference>
<dbReference type="Gene3D" id="1.50.10.10">
    <property type="match status" value="1"/>
</dbReference>
<dbReference type="Gene3D" id="2.70.98.40">
    <property type="entry name" value="Glycoside hydrolase, family 65, N-terminal domain"/>
    <property type="match status" value="1"/>
</dbReference>
<dbReference type="Gene3D" id="2.60.420.10">
    <property type="entry name" value="Maltose phosphorylase, domain 3"/>
    <property type="match status" value="1"/>
</dbReference>
<dbReference type="InterPro" id="IPR008928">
    <property type="entry name" value="6-hairpin_glycosidase_sf"/>
</dbReference>
<dbReference type="InterPro" id="IPR012341">
    <property type="entry name" value="6hp_glycosidase-like_sf"/>
</dbReference>
<dbReference type="InterPro" id="IPR011013">
    <property type="entry name" value="Gal_mutarotase_sf_dom"/>
</dbReference>
<dbReference type="InterPro" id="IPR005194">
    <property type="entry name" value="Glyco_hydro_65_C"/>
</dbReference>
<dbReference type="InterPro" id="IPR005195">
    <property type="entry name" value="Glyco_hydro_65_M"/>
</dbReference>
<dbReference type="InterPro" id="IPR005196">
    <property type="entry name" value="Glyco_hydro_65_N"/>
</dbReference>
<dbReference type="InterPro" id="IPR037018">
    <property type="entry name" value="Glyco_hydro_65_N_sf"/>
</dbReference>
<dbReference type="InterPro" id="IPR017045">
    <property type="entry name" value="Malt_Pase/Glycosyl_Hdrlase"/>
</dbReference>
<dbReference type="PANTHER" id="PTHR11051">
    <property type="entry name" value="GLYCOSYL HYDROLASE-RELATED"/>
    <property type="match status" value="1"/>
</dbReference>
<dbReference type="PANTHER" id="PTHR11051:SF8">
    <property type="entry name" value="PROTEIN-GLUCOSYLGALACTOSYLHYDROXYLYSINE GLUCOSIDASE"/>
    <property type="match status" value="1"/>
</dbReference>
<dbReference type="Pfam" id="PF03633">
    <property type="entry name" value="Glyco_hydro_65C"/>
    <property type="match status" value="1"/>
</dbReference>
<dbReference type="Pfam" id="PF03632">
    <property type="entry name" value="Glyco_hydro_65m"/>
    <property type="match status" value="1"/>
</dbReference>
<dbReference type="Pfam" id="PF03636">
    <property type="entry name" value="Glyco_hydro_65N"/>
    <property type="match status" value="1"/>
</dbReference>
<dbReference type="PIRSF" id="PIRSF036289">
    <property type="entry name" value="Glycosyl_hydrolase_malt_phosph"/>
    <property type="match status" value="1"/>
</dbReference>
<dbReference type="SUPFAM" id="SSF74650">
    <property type="entry name" value="Galactose mutarotase-like"/>
    <property type="match status" value="1"/>
</dbReference>
<dbReference type="SUPFAM" id="SSF48208">
    <property type="entry name" value="Six-hairpin glycosidases"/>
    <property type="match status" value="1"/>
</dbReference>
<evidence type="ECO:0000250" key="1">
    <source>
        <dbReference type="UniProtKB" id="D6XZ22"/>
    </source>
</evidence>
<evidence type="ECO:0000269" key="2">
    <source>
    </source>
</evidence>
<evidence type="ECO:0000303" key="3">
    <source>
    </source>
</evidence>
<evidence type="ECO:0000305" key="4"/>
<evidence type="ECO:0000312" key="5">
    <source>
        <dbReference type="EMBL" id="ACL68803.1"/>
    </source>
</evidence>